<evidence type="ECO:0000250" key="1">
    <source>
        <dbReference type="UniProtKB" id="D4A875"/>
    </source>
</evidence>
<evidence type="ECO:0000256" key="2">
    <source>
        <dbReference type="SAM" id="MobiDB-lite"/>
    </source>
</evidence>
<evidence type="ECO:0000269" key="3">
    <source>
    </source>
</evidence>
<evidence type="ECO:0000269" key="4">
    <source>
    </source>
</evidence>
<evidence type="ECO:0000269" key="5">
    <source>
    </source>
</evidence>
<evidence type="ECO:0000269" key="6">
    <source>
    </source>
</evidence>
<evidence type="ECO:0000269" key="7">
    <source>
    </source>
</evidence>
<evidence type="ECO:0000269" key="8">
    <source>
    </source>
</evidence>
<evidence type="ECO:0000303" key="9">
    <source>
    </source>
</evidence>
<evidence type="ECO:0000305" key="10"/>
<evidence type="ECO:0000305" key="11">
    <source>
    </source>
</evidence>
<name>CXL17_HUMAN</name>
<sequence>MKVLISSLLLLLPLMLMSMVSSSLNPGVARGHRDRGQASRRWLQEGGQECECKDWFLRAPRRKFMTVSGLPKKQCPCDHFKGNVKKTRHQRHHRKPNKHSRACQQFLKQCQLRSFALPL</sequence>
<accession>Q6UXB2</accession>
<accession>A8KAC0</accession>
<organism>
    <name type="scientific">Homo sapiens</name>
    <name type="common">Human</name>
    <dbReference type="NCBI Taxonomy" id="9606"/>
    <lineage>
        <taxon>Eukaryota</taxon>
        <taxon>Metazoa</taxon>
        <taxon>Chordata</taxon>
        <taxon>Craniata</taxon>
        <taxon>Vertebrata</taxon>
        <taxon>Euteleostomi</taxon>
        <taxon>Mammalia</taxon>
        <taxon>Eutheria</taxon>
        <taxon>Euarchontoglires</taxon>
        <taxon>Primates</taxon>
        <taxon>Haplorrhini</taxon>
        <taxon>Catarrhini</taxon>
        <taxon>Hominidae</taxon>
        <taxon>Homo</taxon>
    </lineage>
</organism>
<reference key="1">
    <citation type="journal article" date="2006" name="Biochem. Biophys. Res. Commun.">
        <title>VCC-1, a novel chemokine, promotes tumor growth.</title>
        <authorList>
            <person name="Weinstein E.J."/>
            <person name="Head R."/>
            <person name="Griggs D.W."/>
            <person name="Sun D."/>
            <person name="Evans R.J."/>
            <person name="Swearingen M.L."/>
            <person name="Westlin M.M."/>
            <person name="Mazzarella R."/>
        </authorList>
    </citation>
    <scope>NUCLEOTIDE SEQUENCE [MRNA]</scope>
    <scope>FUNCTION</scope>
    <scope>TISSUE SPECIFICITY</scope>
    <source>
        <tissue>Colon cancer</tissue>
        <tissue>Lung</tissue>
    </source>
</reference>
<reference key="2">
    <citation type="journal article" date="2003" name="Genome Res.">
        <title>The secreted protein discovery initiative (SPDI), a large-scale effort to identify novel human secreted and transmembrane proteins: a bioinformatics assessment.</title>
        <authorList>
            <person name="Clark H.F."/>
            <person name="Gurney A.L."/>
            <person name="Abaya E."/>
            <person name="Baker K."/>
            <person name="Baldwin D.T."/>
            <person name="Brush J."/>
            <person name="Chen J."/>
            <person name="Chow B."/>
            <person name="Chui C."/>
            <person name="Crowley C."/>
            <person name="Currell B."/>
            <person name="Deuel B."/>
            <person name="Dowd P."/>
            <person name="Eaton D."/>
            <person name="Foster J.S."/>
            <person name="Grimaldi C."/>
            <person name="Gu Q."/>
            <person name="Hass P.E."/>
            <person name="Heldens S."/>
            <person name="Huang A."/>
            <person name="Kim H.S."/>
            <person name="Klimowski L."/>
            <person name="Jin Y."/>
            <person name="Johnson S."/>
            <person name="Lee J."/>
            <person name="Lewis L."/>
            <person name="Liao D."/>
            <person name="Mark M.R."/>
            <person name="Robbie E."/>
            <person name="Sanchez C."/>
            <person name="Schoenfeld J."/>
            <person name="Seshagiri S."/>
            <person name="Simmons L."/>
            <person name="Singh J."/>
            <person name="Smith V."/>
            <person name="Stinson J."/>
            <person name="Vagts A."/>
            <person name="Vandlen R.L."/>
            <person name="Watanabe C."/>
            <person name="Wieand D."/>
            <person name="Woods K."/>
            <person name="Xie M.-H."/>
            <person name="Yansura D.G."/>
            <person name="Yi S."/>
            <person name="Yu G."/>
            <person name="Yuan J."/>
            <person name="Zhang M."/>
            <person name="Zhang Z."/>
            <person name="Goddard A.D."/>
            <person name="Wood W.I."/>
            <person name="Godowski P.J."/>
            <person name="Gray A.M."/>
        </authorList>
    </citation>
    <scope>NUCLEOTIDE SEQUENCE [LARGE SCALE MRNA]</scope>
</reference>
<reference key="3">
    <citation type="journal article" date="2004" name="Nat. Genet.">
        <title>Complete sequencing and characterization of 21,243 full-length human cDNAs.</title>
        <authorList>
            <person name="Ota T."/>
            <person name="Suzuki Y."/>
            <person name="Nishikawa T."/>
            <person name="Otsuki T."/>
            <person name="Sugiyama T."/>
            <person name="Irie R."/>
            <person name="Wakamatsu A."/>
            <person name="Hayashi K."/>
            <person name="Sato H."/>
            <person name="Nagai K."/>
            <person name="Kimura K."/>
            <person name="Makita H."/>
            <person name="Sekine M."/>
            <person name="Obayashi M."/>
            <person name="Nishi T."/>
            <person name="Shibahara T."/>
            <person name="Tanaka T."/>
            <person name="Ishii S."/>
            <person name="Yamamoto J."/>
            <person name="Saito K."/>
            <person name="Kawai Y."/>
            <person name="Isono Y."/>
            <person name="Nakamura Y."/>
            <person name="Nagahari K."/>
            <person name="Murakami K."/>
            <person name="Yasuda T."/>
            <person name="Iwayanagi T."/>
            <person name="Wagatsuma M."/>
            <person name="Shiratori A."/>
            <person name="Sudo H."/>
            <person name="Hosoiri T."/>
            <person name="Kaku Y."/>
            <person name="Kodaira H."/>
            <person name="Kondo H."/>
            <person name="Sugawara M."/>
            <person name="Takahashi M."/>
            <person name="Kanda K."/>
            <person name="Yokoi T."/>
            <person name="Furuya T."/>
            <person name="Kikkawa E."/>
            <person name="Omura Y."/>
            <person name="Abe K."/>
            <person name="Kamihara K."/>
            <person name="Katsuta N."/>
            <person name="Sato K."/>
            <person name="Tanikawa M."/>
            <person name="Yamazaki M."/>
            <person name="Ninomiya K."/>
            <person name="Ishibashi T."/>
            <person name="Yamashita H."/>
            <person name="Murakawa K."/>
            <person name="Fujimori K."/>
            <person name="Tanai H."/>
            <person name="Kimata M."/>
            <person name="Watanabe M."/>
            <person name="Hiraoka S."/>
            <person name="Chiba Y."/>
            <person name="Ishida S."/>
            <person name="Ono Y."/>
            <person name="Takiguchi S."/>
            <person name="Watanabe S."/>
            <person name="Yosida M."/>
            <person name="Hotuta T."/>
            <person name="Kusano J."/>
            <person name="Kanehori K."/>
            <person name="Takahashi-Fujii A."/>
            <person name="Hara H."/>
            <person name="Tanase T.-O."/>
            <person name="Nomura Y."/>
            <person name="Togiya S."/>
            <person name="Komai F."/>
            <person name="Hara R."/>
            <person name="Takeuchi K."/>
            <person name="Arita M."/>
            <person name="Imose N."/>
            <person name="Musashino K."/>
            <person name="Yuuki H."/>
            <person name="Oshima A."/>
            <person name="Sasaki N."/>
            <person name="Aotsuka S."/>
            <person name="Yoshikawa Y."/>
            <person name="Matsunawa H."/>
            <person name="Ichihara T."/>
            <person name="Shiohata N."/>
            <person name="Sano S."/>
            <person name="Moriya S."/>
            <person name="Momiyama H."/>
            <person name="Satoh N."/>
            <person name="Takami S."/>
            <person name="Terashima Y."/>
            <person name="Suzuki O."/>
            <person name="Nakagawa S."/>
            <person name="Senoh A."/>
            <person name="Mizoguchi H."/>
            <person name="Goto Y."/>
            <person name="Shimizu F."/>
            <person name="Wakebe H."/>
            <person name="Hishigaki H."/>
            <person name="Watanabe T."/>
            <person name="Sugiyama A."/>
            <person name="Takemoto M."/>
            <person name="Kawakami B."/>
            <person name="Yamazaki M."/>
            <person name="Watanabe K."/>
            <person name="Kumagai A."/>
            <person name="Itakura S."/>
            <person name="Fukuzumi Y."/>
            <person name="Fujimori Y."/>
            <person name="Komiyama M."/>
            <person name="Tashiro H."/>
            <person name="Tanigami A."/>
            <person name="Fujiwara T."/>
            <person name="Ono T."/>
            <person name="Yamada K."/>
            <person name="Fujii Y."/>
            <person name="Ozaki K."/>
            <person name="Hirao M."/>
            <person name="Ohmori Y."/>
            <person name="Kawabata A."/>
            <person name="Hikiji T."/>
            <person name="Kobatake N."/>
            <person name="Inagaki H."/>
            <person name="Ikema Y."/>
            <person name="Okamoto S."/>
            <person name="Okitani R."/>
            <person name="Kawakami T."/>
            <person name="Noguchi S."/>
            <person name="Itoh T."/>
            <person name="Shigeta K."/>
            <person name="Senba T."/>
            <person name="Matsumura K."/>
            <person name="Nakajima Y."/>
            <person name="Mizuno T."/>
            <person name="Morinaga M."/>
            <person name="Sasaki M."/>
            <person name="Togashi T."/>
            <person name="Oyama M."/>
            <person name="Hata H."/>
            <person name="Watanabe M."/>
            <person name="Komatsu T."/>
            <person name="Mizushima-Sugano J."/>
            <person name="Satoh T."/>
            <person name="Shirai Y."/>
            <person name="Takahashi Y."/>
            <person name="Nakagawa K."/>
            <person name="Okumura K."/>
            <person name="Nagase T."/>
            <person name="Nomura N."/>
            <person name="Kikuchi H."/>
            <person name="Masuho Y."/>
            <person name="Yamashita R."/>
            <person name="Nakai K."/>
            <person name="Yada T."/>
            <person name="Nakamura Y."/>
            <person name="Ohara O."/>
            <person name="Isogai T."/>
            <person name="Sugano S."/>
        </authorList>
    </citation>
    <scope>NUCLEOTIDE SEQUENCE [LARGE SCALE MRNA]</scope>
    <source>
        <tissue>Trachea</tissue>
    </source>
</reference>
<reference key="4">
    <citation type="journal article" date="2004" name="Nature">
        <title>The DNA sequence and biology of human chromosome 19.</title>
        <authorList>
            <person name="Grimwood J."/>
            <person name="Gordon L.A."/>
            <person name="Olsen A.S."/>
            <person name="Terry A."/>
            <person name="Schmutz J."/>
            <person name="Lamerdin J.E."/>
            <person name="Hellsten U."/>
            <person name="Goodstein D."/>
            <person name="Couronne O."/>
            <person name="Tran-Gyamfi M."/>
            <person name="Aerts A."/>
            <person name="Altherr M."/>
            <person name="Ashworth L."/>
            <person name="Bajorek E."/>
            <person name="Black S."/>
            <person name="Branscomb E."/>
            <person name="Caenepeel S."/>
            <person name="Carrano A.V."/>
            <person name="Caoile C."/>
            <person name="Chan Y.M."/>
            <person name="Christensen M."/>
            <person name="Cleland C.A."/>
            <person name="Copeland A."/>
            <person name="Dalin E."/>
            <person name="Dehal P."/>
            <person name="Denys M."/>
            <person name="Detter J.C."/>
            <person name="Escobar J."/>
            <person name="Flowers D."/>
            <person name="Fotopulos D."/>
            <person name="Garcia C."/>
            <person name="Georgescu A.M."/>
            <person name="Glavina T."/>
            <person name="Gomez M."/>
            <person name="Gonzales E."/>
            <person name="Groza M."/>
            <person name="Hammon N."/>
            <person name="Hawkins T."/>
            <person name="Haydu L."/>
            <person name="Ho I."/>
            <person name="Huang W."/>
            <person name="Israni S."/>
            <person name="Jett J."/>
            <person name="Kadner K."/>
            <person name="Kimball H."/>
            <person name="Kobayashi A."/>
            <person name="Larionov V."/>
            <person name="Leem S.-H."/>
            <person name="Lopez F."/>
            <person name="Lou Y."/>
            <person name="Lowry S."/>
            <person name="Malfatti S."/>
            <person name="Martinez D."/>
            <person name="McCready P.M."/>
            <person name="Medina C."/>
            <person name="Morgan J."/>
            <person name="Nelson K."/>
            <person name="Nolan M."/>
            <person name="Ovcharenko I."/>
            <person name="Pitluck S."/>
            <person name="Pollard M."/>
            <person name="Popkie A.P."/>
            <person name="Predki P."/>
            <person name="Quan G."/>
            <person name="Ramirez L."/>
            <person name="Rash S."/>
            <person name="Retterer J."/>
            <person name="Rodriguez A."/>
            <person name="Rogers S."/>
            <person name="Salamov A."/>
            <person name="Salazar A."/>
            <person name="She X."/>
            <person name="Smith D."/>
            <person name="Slezak T."/>
            <person name="Solovyev V."/>
            <person name="Thayer N."/>
            <person name="Tice H."/>
            <person name="Tsai M."/>
            <person name="Ustaszewska A."/>
            <person name="Vo N."/>
            <person name="Wagner M."/>
            <person name="Wheeler J."/>
            <person name="Wu K."/>
            <person name="Xie G."/>
            <person name="Yang J."/>
            <person name="Dubchak I."/>
            <person name="Furey T.S."/>
            <person name="DeJong P."/>
            <person name="Dickson M."/>
            <person name="Gordon D."/>
            <person name="Eichler E.E."/>
            <person name="Pennacchio L.A."/>
            <person name="Richardson P."/>
            <person name="Stubbs L."/>
            <person name="Rokhsar D.S."/>
            <person name="Myers R.M."/>
            <person name="Rubin E.M."/>
            <person name="Lucas S.M."/>
        </authorList>
    </citation>
    <scope>NUCLEOTIDE SEQUENCE [LARGE SCALE GENOMIC DNA]</scope>
</reference>
<reference key="5">
    <citation type="journal article" date="2004" name="Genome Res.">
        <title>The status, quality, and expansion of the NIH full-length cDNA project: the Mammalian Gene Collection (MGC).</title>
        <authorList>
            <consortium name="The MGC Project Team"/>
        </authorList>
    </citation>
    <scope>NUCLEOTIDE SEQUENCE [LARGE SCALE MRNA]</scope>
    <source>
        <tissue>Heart</tissue>
        <tissue>Lung</tissue>
    </source>
</reference>
<reference key="6">
    <citation type="journal article" date="2004" name="Protein Sci.">
        <title>Signal peptide prediction based on analysis of experimentally verified cleavage sites.</title>
        <authorList>
            <person name="Zhang Z."/>
            <person name="Henzel W.J."/>
        </authorList>
    </citation>
    <scope>PROTEIN SEQUENCE OF 22-37</scope>
</reference>
<reference key="7">
    <citation type="journal article" date="2015" name="J. Proteome Res.">
        <title>Human basal tear peptidome characterization by CID, HCD, and ETD followed by in silico and in vitro analyses for antimicrobial peptide identification.</title>
        <authorList>
            <person name="Azkargorta M."/>
            <person name="Soria J."/>
            <person name="Ojeda C."/>
            <person name="Guzman F."/>
            <person name="Acera A."/>
            <person name="Iloro I."/>
            <person name="Suarez T."/>
            <person name="Elortza F."/>
        </authorList>
    </citation>
    <scope>PROTEIN SEQUENCE OF 23-61 AND 97-112</scope>
    <scope>IDENTIFICATION BY MASS SPECTROMETRY</scope>
    <source>
        <tissue>Tear</tissue>
    </source>
</reference>
<reference key="8">
    <citation type="journal article" date="2006" name="J. Immunol.">
        <title>Novel human dendritic cell- and monocyte-attracting chemokine-like protein identified by fold recognition methods.</title>
        <authorList>
            <person name="Pisabarro M.T."/>
            <person name="Leung B."/>
            <person name="Kwong M."/>
            <person name="Corpuz R."/>
            <person name="Frantz G.D."/>
            <person name="Chiang N."/>
            <person name="Vandlen R."/>
            <person name="Diehl L.J."/>
            <person name="Skelton N."/>
            <person name="Kim H.S."/>
            <person name="Eaton D."/>
            <person name="Schmidt K.N."/>
        </authorList>
    </citation>
    <scope>FUNCTION</scope>
    <scope>TISSUE SPECIFICITY</scope>
    <scope>CIRCULAR DICHROISM</scope>
    <scope>3D-STRUCTURE MODELING</scope>
    <scope>DISULFIDE BONDS</scope>
    <scope>MUTAGENESIS OF CYS-50; CYS-52; CYS-75; CYS-77; CYS-103 AND CYS-110</scope>
</reference>
<reference key="9">
    <citation type="journal article" date="2007" name="Infect. Immun.">
        <title>Broad up-regulation of innate defense factors during acute cholera.</title>
        <authorList>
            <person name="Flach C.F."/>
            <person name="Qadri F."/>
            <person name="Bhuiyan T.R."/>
            <person name="Alam N.H."/>
            <person name="Jennische E."/>
            <person name="Lonnroth I."/>
            <person name="Holmgren J."/>
        </authorList>
    </citation>
    <scope>FUNCTION</scope>
    <scope>INDUCTION</scope>
</reference>
<reference key="10">
    <citation type="journal article" date="2013" name="Am. J. Physiol.">
        <title>CXCL17, an orphan chemokine, acts as a novel angiogenic and anti-inflammatory factor.</title>
        <authorList>
            <person name="Lee W.Y."/>
            <person name="Wang C.J."/>
            <person name="Lin T.Y."/>
            <person name="Hsiao C.L."/>
            <person name="Luo C.W."/>
        </authorList>
    </citation>
    <scope>SUBCELLULAR LOCATION</scope>
    <scope>FUNCTION (6-CYS CXCL17 AND 4-CYS CXCL17)</scope>
</reference>
<reference key="11">
    <citation type="journal article" date="2015" name="J. Immunol.">
        <title>GPR35/CXCR8 is the receptor of the mucosal chemokine CXCL17.</title>
        <authorList>
            <person name="Maravillas-Montero J.L."/>
            <person name="Burkhardt A.M."/>
            <person name="Hevezi P.A."/>
            <person name="Carnevale C.D."/>
            <person name="Smit M.J."/>
            <person name="Zlotnik A."/>
        </authorList>
    </citation>
    <scope>INTERACTION WITH GPR35</scope>
</reference>
<feature type="signal peptide" evidence="3">
    <location>
        <begin position="1"/>
        <end position="21"/>
    </location>
</feature>
<feature type="chain" id="PRO_0000311097" description="C-X-C motif chemokine 17">
    <location>
        <begin position="22"/>
        <end position="119"/>
    </location>
</feature>
<feature type="chain" id="PRO_0000438487" description="4-Cys CXCL17" evidence="10">
    <location>
        <begin position="64"/>
        <end position="119"/>
    </location>
</feature>
<feature type="region of interest" description="Disordered" evidence="2">
    <location>
        <begin position="81"/>
        <end position="100"/>
    </location>
</feature>
<feature type="compositionally biased region" description="Basic residues" evidence="2">
    <location>
        <begin position="82"/>
        <end position="100"/>
    </location>
</feature>
<feature type="site" description="Cleavage" evidence="1">
    <location>
        <begin position="63"/>
        <end position="64"/>
    </location>
</feature>
<feature type="disulfide bond" evidence="11">
    <location>
        <begin position="75"/>
        <end position="103"/>
    </location>
</feature>
<feature type="disulfide bond" evidence="11">
    <location>
        <begin position="77"/>
        <end position="110"/>
    </location>
</feature>
<feature type="mutagenesis site" description="Inhibits migration of nonactivated dendritic cells and monocytes; when associated with S-52; S-75; S-77; S-103 and S-110." evidence="4">
    <original>C</original>
    <variation>S</variation>
    <location>
        <position position="50"/>
    </location>
</feature>
<feature type="mutagenesis site" description="Inhibits migration of nonactivated dendritic cells and monocytes; when associated with S-50; S-75; S-77; S-103 and S-110." evidence="4">
    <original>C</original>
    <variation>S</variation>
    <location>
        <position position="52"/>
    </location>
</feature>
<feature type="mutagenesis site" description="Inhibits migration of nonactivated dendritic cells and monocytes; when associated with S-50; S-52; S-77; S-103 and S-110." evidence="4">
    <original>C</original>
    <variation>S</variation>
    <location>
        <position position="75"/>
    </location>
</feature>
<feature type="mutagenesis site" description="Inhibits migration of nonactivated dendritic cells and monocytes; when associated with S-50; S-52; S-75; S-103 and S-110." evidence="4">
    <original>C</original>
    <variation>S</variation>
    <location>
        <position position="77"/>
    </location>
</feature>
<feature type="mutagenesis site" description="Inhibits migration of nonactivated dendritic cells and monocytes; when associated with S-50; S-52; S-75; S-77 and S-110." evidence="4">
    <original>C</original>
    <variation>S</variation>
    <location>
        <position position="103"/>
    </location>
</feature>
<feature type="mutagenesis site" description="Inhibits migration of nonactivated dendritic cells and monocytes; when associated with S-50; S-52; S-75; S-77 and S-103." evidence="4">
    <original>C</original>
    <variation>S</variation>
    <location>
        <position position="110"/>
    </location>
</feature>
<protein>
    <recommendedName>
        <fullName>C-X-C motif chemokine 17</fullName>
        <shortName evidence="9">6-Cys CXCL17</shortName>
    </recommendedName>
    <alternativeName>
        <fullName>Dendritic cell and monocyte chemokine-like protein</fullName>
        <shortName>DMC</shortName>
    </alternativeName>
    <alternativeName>
        <fullName>VEGF coregulated chemokine 1</fullName>
    </alternativeName>
    <component>
        <recommendedName>
            <fullName evidence="9">4-Cys CXCL17</fullName>
        </recommendedName>
    </component>
</protein>
<proteinExistence type="evidence at protein level"/>
<dbReference type="EMBL" id="AY598464">
    <property type="protein sequence ID" value="AAU04875.1"/>
    <property type="molecule type" value="mRNA"/>
</dbReference>
<dbReference type="EMBL" id="AY358433">
    <property type="protein sequence ID" value="AAQ88799.1"/>
    <property type="molecule type" value="mRNA"/>
</dbReference>
<dbReference type="EMBL" id="AK292985">
    <property type="protein sequence ID" value="BAF85674.1"/>
    <property type="molecule type" value="mRNA"/>
</dbReference>
<dbReference type="EMBL" id="AC011497">
    <property type="status" value="NOT_ANNOTATED_CDS"/>
    <property type="molecule type" value="Genomic_DNA"/>
</dbReference>
<dbReference type="EMBL" id="BC093946">
    <property type="protein sequence ID" value="AAH93946.1"/>
    <property type="molecule type" value="mRNA"/>
</dbReference>
<dbReference type="EMBL" id="BC112095">
    <property type="protein sequence ID" value="AAI12096.1"/>
    <property type="molecule type" value="mRNA"/>
</dbReference>
<dbReference type="CCDS" id="CCDS12608.1"/>
<dbReference type="RefSeq" id="NP_940879.1">
    <property type="nucleotide sequence ID" value="NM_198477.3"/>
</dbReference>
<dbReference type="BioGRID" id="129832">
    <property type="interactions" value="17"/>
</dbReference>
<dbReference type="FunCoup" id="Q6UXB2">
    <property type="interactions" value="368"/>
</dbReference>
<dbReference type="IntAct" id="Q6UXB2">
    <property type="interactions" value="17"/>
</dbReference>
<dbReference type="STRING" id="9606.ENSP00000472467"/>
<dbReference type="BioMuta" id="CXCL17"/>
<dbReference type="DMDM" id="74738198"/>
<dbReference type="jPOST" id="Q6UXB2"/>
<dbReference type="MassIVE" id="Q6UXB2"/>
<dbReference type="PaxDb" id="9606-ENSP00000472467"/>
<dbReference type="PeptideAtlas" id="Q6UXB2"/>
<dbReference type="ProteomicsDB" id="67583"/>
<dbReference type="Pumba" id="Q6UXB2"/>
<dbReference type="Antibodypedia" id="66724">
    <property type="antibodies" value="100 antibodies from 17 providers"/>
</dbReference>
<dbReference type="DNASU" id="284340"/>
<dbReference type="Ensembl" id="ENST00000601181.6">
    <property type="protein sequence ID" value="ENSP00000472467.1"/>
    <property type="gene ID" value="ENSG00000189377.9"/>
</dbReference>
<dbReference type="GeneID" id="284340"/>
<dbReference type="KEGG" id="hsa:284340"/>
<dbReference type="MANE-Select" id="ENST00000601181.6">
    <property type="protein sequence ID" value="ENSP00000472467.1"/>
    <property type="RefSeq nucleotide sequence ID" value="NM_198477.3"/>
    <property type="RefSeq protein sequence ID" value="NP_940879.1"/>
</dbReference>
<dbReference type="UCSC" id="uc002otu.4">
    <property type="organism name" value="human"/>
</dbReference>
<dbReference type="AGR" id="HGNC:19232"/>
<dbReference type="CTD" id="284340"/>
<dbReference type="DisGeNET" id="284340"/>
<dbReference type="GeneCards" id="CXCL17"/>
<dbReference type="HGNC" id="HGNC:19232">
    <property type="gene designation" value="CXCL17"/>
</dbReference>
<dbReference type="HPA" id="ENSG00000189377">
    <property type="expression patterns" value="Group enriched (esophagus, lung, salivary gland, stomach)"/>
</dbReference>
<dbReference type="MIM" id="611387">
    <property type="type" value="gene"/>
</dbReference>
<dbReference type="neXtProt" id="NX_Q6UXB2"/>
<dbReference type="OpenTargets" id="ENSG00000189377"/>
<dbReference type="PharmGKB" id="PA162383045"/>
<dbReference type="VEuPathDB" id="HostDB:ENSG00000189377"/>
<dbReference type="eggNOG" id="ENOG502TDC2">
    <property type="taxonomic scope" value="Eukaryota"/>
</dbReference>
<dbReference type="GeneTree" id="ENSGT00390000002861"/>
<dbReference type="HOGENOM" id="CLU_166962_0_0_1"/>
<dbReference type="InParanoid" id="Q6UXB2"/>
<dbReference type="OMA" id="CPCDHLK"/>
<dbReference type="OrthoDB" id="9833421at2759"/>
<dbReference type="PAN-GO" id="Q6UXB2">
    <property type="GO annotations" value="6 GO annotations based on evolutionary models"/>
</dbReference>
<dbReference type="PhylomeDB" id="Q6UXB2"/>
<dbReference type="TreeFam" id="TF342477"/>
<dbReference type="PathwayCommons" id="Q6UXB2"/>
<dbReference type="SignaLink" id="Q6UXB2"/>
<dbReference type="BioGRID-ORCS" id="284340">
    <property type="hits" value="22 hits in 1142 CRISPR screens"/>
</dbReference>
<dbReference type="GenomeRNAi" id="284340"/>
<dbReference type="Pharos" id="Q6UXB2">
    <property type="development level" value="Tbio"/>
</dbReference>
<dbReference type="PRO" id="PR:Q6UXB2"/>
<dbReference type="Proteomes" id="UP000005640">
    <property type="component" value="Chromosome 19"/>
</dbReference>
<dbReference type="RNAct" id="Q6UXB2">
    <property type="molecule type" value="protein"/>
</dbReference>
<dbReference type="Bgee" id="ENSG00000189377">
    <property type="expression patterns" value="Expressed in nasal cavity epithelium and 141 other cell types or tissues"/>
</dbReference>
<dbReference type="ExpressionAtlas" id="Q6UXB2">
    <property type="expression patterns" value="baseline and differential"/>
</dbReference>
<dbReference type="GO" id="GO:0005615">
    <property type="term" value="C:extracellular space"/>
    <property type="evidence" value="ECO:0000315"/>
    <property type="project" value="UniProtKB"/>
</dbReference>
<dbReference type="GO" id="GO:0001525">
    <property type="term" value="P:angiogenesis"/>
    <property type="evidence" value="ECO:0007669"/>
    <property type="project" value="UniProtKB-KW"/>
</dbReference>
<dbReference type="GO" id="GO:0030154">
    <property type="term" value="P:cell differentiation"/>
    <property type="evidence" value="ECO:0007669"/>
    <property type="project" value="UniProtKB-KW"/>
</dbReference>
<dbReference type="GO" id="GO:0048246">
    <property type="term" value="P:macrophage chemotaxis"/>
    <property type="evidence" value="ECO:0000318"/>
    <property type="project" value="GO_Central"/>
</dbReference>
<dbReference type="GO" id="GO:0050728">
    <property type="term" value="P:negative regulation of inflammatory response"/>
    <property type="evidence" value="ECO:0000315"/>
    <property type="project" value="UniProtKB"/>
</dbReference>
<dbReference type="GO" id="GO:0070374">
    <property type="term" value="P:positive regulation of ERK1 and ERK2 cascade"/>
    <property type="evidence" value="ECO:0000315"/>
    <property type="project" value="GO_Central"/>
</dbReference>
<dbReference type="GO" id="GO:0010759">
    <property type="term" value="P:positive regulation of macrophage chemotaxis"/>
    <property type="evidence" value="ECO:0000315"/>
    <property type="project" value="UniProtKB"/>
</dbReference>
<dbReference type="GO" id="GO:0090026">
    <property type="term" value="P:positive regulation of monocyte chemotaxis"/>
    <property type="evidence" value="ECO:0000315"/>
    <property type="project" value="UniProtKB"/>
</dbReference>
<dbReference type="GO" id="GO:0010575">
    <property type="term" value="P:positive regulation of vascular endothelial growth factor production"/>
    <property type="evidence" value="ECO:0000315"/>
    <property type="project" value="UniProtKB"/>
</dbReference>
<dbReference type="InterPro" id="IPR029183">
    <property type="entry name" value="CXCL17"/>
</dbReference>
<dbReference type="PANTHER" id="PTHR37351">
    <property type="entry name" value="C-X-C MOTIF CHEMOKINE 17"/>
    <property type="match status" value="1"/>
</dbReference>
<dbReference type="PANTHER" id="PTHR37351:SF1">
    <property type="entry name" value="C-X-C MOTIF CHEMOKINE 17"/>
    <property type="match status" value="1"/>
</dbReference>
<dbReference type="Pfam" id="PF15211">
    <property type="entry name" value="CXCL17"/>
    <property type="match status" value="1"/>
</dbReference>
<gene>
    <name type="primary">CXCL17</name>
    <name type="synonym">VCC1</name>
    <name type="ORF">UNQ473/PRO842</name>
</gene>
<keyword id="KW-0037">Angiogenesis</keyword>
<keyword id="KW-0145">Chemotaxis</keyword>
<keyword id="KW-0165">Cleavage on pair of basic residues</keyword>
<keyword id="KW-0217">Developmental protein</keyword>
<keyword id="KW-0221">Differentiation</keyword>
<keyword id="KW-0903">Direct protein sequencing</keyword>
<keyword id="KW-1015">Disulfide bond</keyword>
<keyword id="KW-1267">Proteomics identification</keyword>
<keyword id="KW-1185">Reference proteome</keyword>
<keyword id="KW-0964">Secreted</keyword>
<keyword id="KW-0732">Signal</keyword>
<comment type="function">
    <text evidence="4 5 6 7 8">Chemokine that acts as a chemoattractant for monocytes, macrophages and dendritic cells (PubMed:16455961, PubMed:23115081). Plays a role in angiogenesis and possibly in the development of tumors (PubMed:16989774, PubMed:23115081). Acts as an anti-inflammatory in the stomach (PubMed:23115081). May play a role in the innate defense against infections (PubMed:17307946). Activates the C-X-C chemokine receptor GPR35 to induce a rapid and transient rise in the level of intracellular calcium ions (PubMed:25411203).</text>
</comment>
<comment type="function">
    <molecule>4-Cys CXCL17</molecule>
    <text evidence="7">Seems to exhibit much higher chemoattractant potency on monocytes and macrophages than 6-Cys CXCL17.</text>
</comment>
<comment type="interaction">
    <interactant intactId="EBI-16804198">
        <id>Q6UXB2</id>
    </interactant>
    <interactant intactId="EBI-2848366">
        <id>P13501</id>
        <label>CCL5</label>
    </interactant>
    <organismsDiffer>false</organismsDiffer>
    <experiments>2</experiments>
</comment>
<comment type="interaction">
    <interactant intactId="EBI-16804198">
        <id>Q6UXB2</id>
    </interactant>
    <interactant intactId="EBI-3913254">
        <id>P48061</id>
        <label>CXCL12</label>
    </interactant>
    <organismsDiffer>false</organismsDiffer>
    <experiments>2</experiments>
</comment>
<comment type="interaction">
    <interactant intactId="EBI-16804198">
        <id>Q6UXB2</id>
    </interactant>
    <interactant intactId="EBI-2565740">
        <id>P02776</id>
        <label>PF4</label>
    </interactant>
    <organismsDiffer>false</organismsDiffer>
    <experiments>2</experiments>
</comment>
<comment type="subcellular location">
    <subcellularLocation>
        <location evidence="7">Secreted</location>
    </subcellularLocation>
</comment>
<comment type="tissue specificity">
    <text evidence="4 5">Detected in trachea, stomach, lung and skeletal muscle. Detected in intestine and in normal and asthmatic lung (at protein level). Breast tumors showed 3- to 24-fold up-regulation.</text>
</comment>
<comment type="developmental stage">
    <text>Detected in fetal lung.</text>
</comment>
<comment type="induction">
    <text evidence="6">Found to be up-regulated in duodenal mucosa during acute cholera.</text>
</comment>
<comment type="PTM">
    <text evidence="1">Likely to undergo an endoproteolytic process to form a four-cysteine-containing mature peptide with a canonical CXC chemokine scaffold after secretion.</text>
</comment>
<comment type="similarity">
    <text evidence="10">Belongs to the intercrine alpha (chemokine CxC) family.</text>
</comment>
<comment type="online information" name="Wikipedia">
    <link uri="https://en.wikipedia.org/wiki/CXCL17"/>
    <text>CXCL17 entry</text>
</comment>